<comment type="function">
    <text evidence="1">Catalyzes the condensation of ATP and 5-phosphoribose 1-diphosphate to form N'-(5'-phosphoribosyl)-ATP (PR-ATP). Has a crucial role in the pathway because the rate of histidine biosynthesis seems to be controlled primarily by regulation of HisG enzymatic activity.</text>
</comment>
<comment type="catalytic activity">
    <reaction evidence="1">
        <text>1-(5-phospho-beta-D-ribosyl)-ATP + diphosphate = 5-phospho-alpha-D-ribose 1-diphosphate + ATP</text>
        <dbReference type="Rhea" id="RHEA:18473"/>
        <dbReference type="ChEBI" id="CHEBI:30616"/>
        <dbReference type="ChEBI" id="CHEBI:33019"/>
        <dbReference type="ChEBI" id="CHEBI:58017"/>
        <dbReference type="ChEBI" id="CHEBI:73183"/>
        <dbReference type="EC" id="2.4.2.17"/>
    </reaction>
</comment>
<comment type="pathway">
    <text evidence="1">Amino-acid biosynthesis; L-histidine biosynthesis; L-histidine from 5-phospho-alpha-D-ribose 1-diphosphate: step 1/9.</text>
</comment>
<comment type="subunit">
    <text evidence="1">Heteromultimer composed of HisG and HisZ subunits.</text>
</comment>
<comment type="subcellular location">
    <subcellularLocation>
        <location evidence="1">Cytoplasm</location>
    </subcellularLocation>
</comment>
<comment type="domain">
    <text>Lacks the C-terminal regulatory region which is replaced by HisZ.</text>
</comment>
<comment type="similarity">
    <text evidence="1">Belongs to the ATP phosphoribosyltransferase family. Short subfamily.</text>
</comment>
<gene>
    <name evidence="1" type="primary">hisG</name>
    <name type="ordered locus">SynRCC307_0838</name>
</gene>
<dbReference type="EC" id="2.4.2.17" evidence="1"/>
<dbReference type="EMBL" id="CT978603">
    <property type="protein sequence ID" value="CAK27741.1"/>
    <property type="molecule type" value="Genomic_DNA"/>
</dbReference>
<dbReference type="SMR" id="A5GS82"/>
<dbReference type="STRING" id="316278.SynRCC307_0838"/>
<dbReference type="KEGG" id="syr:SynRCC307_0838"/>
<dbReference type="eggNOG" id="COG0040">
    <property type="taxonomic scope" value="Bacteria"/>
</dbReference>
<dbReference type="HOGENOM" id="CLU_038115_2_0_3"/>
<dbReference type="OrthoDB" id="9801867at2"/>
<dbReference type="UniPathway" id="UPA00031">
    <property type="reaction ID" value="UER00006"/>
</dbReference>
<dbReference type="Proteomes" id="UP000001115">
    <property type="component" value="Chromosome"/>
</dbReference>
<dbReference type="GO" id="GO:0005737">
    <property type="term" value="C:cytoplasm"/>
    <property type="evidence" value="ECO:0007669"/>
    <property type="project" value="UniProtKB-SubCell"/>
</dbReference>
<dbReference type="GO" id="GO:0005524">
    <property type="term" value="F:ATP binding"/>
    <property type="evidence" value="ECO:0007669"/>
    <property type="project" value="UniProtKB-KW"/>
</dbReference>
<dbReference type="GO" id="GO:0003879">
    <property type="term" value="F:ATP phosphoribosyltransferase activity"/>
    <property type="evidence" value="ECO:0007669"/>
    <property type="project" value="UniProtKB-UniRule"/>
</dbReference>
<dbReference type="GO" id="GO:0000105">
    <property type="term" value="P:L-histidine biosynthetic process"/>
    <property type="evidence" value="ECO:0007669"/>
    <property type="project" value="UniProtKB-UniRule"/>
</dbReference>
<dbReference type="CDD" id="cd13595">
    <property type="entry name" value="PBP2_HisGs"/>
    <property type="match status" value="1"/>
</dbReference>
<dbReference type="Gene3D" id="3.40.190.10">
    <property type="entry name" value="Periplasmic binding protein-like II"/>
    <property type="match status" value="2"/>
</dbReference>
<dbReference type="HAMAP" id="MF_01018">
    <property type="entry name" value="HisG_Short"/>
    <property type="match status" value="1"/>
</dbReference>
<dbReference type="InterPro" id="IPR013820">
    <property type="entry name" value="ATP_PRibTrfase_cat"/>
</dbReference>
<dbReference type="InterPro" id="IPR018198">
    <property type="entry name" value="ATP_PRibTrfase_CS"/>
</dbReference>
<dbReference type="InterPro" id="IPR001348">
    <property type="entry name" value="ATP_PRibTrfase_HisG"/>
</dbReference>
<dbReference type="InterPro" id="IPR024893">
    <property type="entry name" value="ATP_PRibTrfase_HisG_short"/>
</dbReference>
<dbReference type="NCBIfam" id="TIGR00070">
    <property type="entry name" value="hisG"/>
    <property type="match status" value="1"/>
</dbReference>
<dbReference type="PANTHER" id="PTHR21403:SF8">
    <property type="entry name" value="ATP PHOSPHORIBOSYLTRANSFERASE"/>
    <property type="match status" value="1"/>
</dbReference>
<dbReference type="PANTHER" id="PTHR21403">
    <property type="entry name" value="ATP PHOSPHORIBOSYLTRANSFERASE ATP-PRTASE"/>
    <property type="match status" value="1"/>
</dbReference>
<dbReference type="Pfam" id="PF01634">
    <property type="entry name" value="HisG"/>
    <property type="match status" value="1"/>
</dbReference>
<dbReference type="SUPFAM" id="SSF53850">
    <property type="entry name" value="Periplasmic binding protein-like II"/>
    <property type="match status" value="1"/>
</dbReference>
<dbReference type="PROSITE" id="PS01316">
    <property type="entry name" value="ATP_P_PHORIBOSYLTR"/>
    <property type="match status" value="1"/>
</dbReference>
<proteinExistence type="inferred from homology"/>
<sequence length="213" mass="22630">MLTVALPKGALLKDSVARFAAAGLDFSAITAADNRQLMLPSACGRARALLVRNGDVPVYVAYGQAQLGVVGYDVLKEQQRTVAQLLDLGFGGCRMAVAVKESSPYRRASDLPAHCRVASKFTSSAQEFFNQLDLPVELIHLTGSVELGPITGISEAIVDLVATGRTLRDNGLIAIEDLFHSTARLIGNPLALRLDTGELNELVQAMEGQGVTP</sequence>
<name>HIS1_SYNR3</name>
<feature type="chain" id="PRO_1000063315" description="ATP phosphoribosyltransferase">
    <location>
        <begin position="1"/>
        <end position="213"/>
    </location>
</feature>
<protein>
    <recommendedName>
        <fullName evidence="1">ATP phosphoribosyltransferase</fullName>
        <shortName evidence="1">ATP-PRT</shortName>
        <shortName evidence="1">ATP-PRTase</shortName>
        <ecNumber evidence="1">2.4.2.17</ecNumber>
    </recommendedName>
</protein>
<keyword id="KW-0028">Amino-acid biosynthesis</keyword>
<keyword id="KW-0067">ATP-binding</keyword>
<keyword id="KW-0963">Cytoplasm</keyword>
<keyword id="KW-0328">Glycosyltransferase</keyword>
<keyword id="KW-0368">Histidine biosynthesis</keyword>
<keyword id="KW-0547">Nucleotide-binding</keyword>
<keyword id="KW-1185">Reference proteome</keyword>
<keyword id="KW-0808">Transferase</keyword>
<evidence type="ECO:0000255" key="1">
    <source>
        <dbReference type="HAMAP-Rule" id="MF_01018"/>
    </source>
</evidence>
<organism>
    <name type="scientific">Synechococcus sp. (strain RCC307)</name>
    <dbReference type="NCBI Taxonomy" id="316278"/>
    <lineage>
        <taxon>Bacteria</taxon>
        <taxon>Bacillati</taxon>
        <taxon>Cyanobacteriota</taxon>
        <taxon>Cyanophyceae</taxon>
        <taxon>Synechococcales</taxon>
        <taxon>Synechococcaceae</taxon>
        <taxon>Synechococcus</taxon>
    </lineage>
</organism>
<accession>A5GS82</accession>
<reference key="1">
    <citation type="submission" date="2006-05" db="EMBL/GenBank/DDBJ databases">
        <authorList>
            <consortium name="Genoscope"/>
        </authorList>
    </citation>
    <scope>NUCLEOTIDE SEQUENCE [LARGE SCALE GENOMIC DNA]</scope>
    <source>
        <strain>RCC307</strain>
    </source>
</reference>